<protein>
    <recommendedName>
        <fullName evidence="1">Lysine--tRNA ligase</fullName>
        <ecNumber evidence="1">6.1.1.6</ecNumber>
    </recommendedName>
    <alternativeName>
        <fullName evidence="1">Lysyl-tRNA synthetase</fullName>
        <shortName evidence="1">LysRS</shortName>
    </alternativeName>
</protein>
<sequence>MSAADTAEDLPEQFRIRRDKRARLLAQGRDPYPVAVPRTHTLAEVRAAHPDLPIDTATEDIVGVAGRVIFARNSGKLCFATLQDGDGTQLQVMISLDKVGQAALDAWKADVDLGDIVYVHGAVISSRRGELSVLADCWRIAAKSLRPLPVAHKEMSEESRVRQRYVDLIVRPEARAVARLRIAVVRAIRTALQRRGFLEVETPVLQTLAGGAAARPFATHSNALDIDLYLRIAPELFLKRCIVGGFDKVFELNRVFRNEGADSTHSPEFSMLETYQTYGTYDDSAVVTRELIQEVADEAIGTRQLPLPDGSVYDIDGEWATIQMYPSLSVALGEEITPQTTVDRLRGIADSLGLEKDPAIHDNRGFGHGKLIEELWERTVGKSLSAPTFVKDFPVQTTPLTRQHRSIPGVTEKWDLYLRGIELATGYSELSDPVVQRERFADQARAAAAGDDEAMVLDEDFLAALEYGMPPCTGTGMGIDRLLMSLTGLSIRETVLFPIVRPHSN</sequence>
<name>SYK_MYCTA</name>
<evidence type="ECO:0000255" key="1">
    <source>
        <dbReference type="HAMAP-Rule" id="MF_00252"/>
    </source>
</evidence>
<accession>A5U8S4</accession>
<comment type="catalytic activity">
    <reaction evidence="1">
        <text>tRNA(Lys) + L-lysine + ATP = L-lysyl-tRNA(Lys) + AMP + diphosphate</text>
        <dbReference type="Rhea" id="RHEA:20792"/>
        <dbReference type="Rhea" id="RHEA-COMP:9696"/>
        <dbReference type="Rhea" id="RHEA-COMP:9697"/>
        <dbReference type="ChEBI" id="CHEBI:30616"/>
        <dbReference type="ChEBI" id="CHEBI:32551"/>
        <dbReference type="ChEBI" id="CHEBI:33019"/>
        <dbReference type="ChEBI" id="CHEBI:78442"/>
        <dbReference type="ChEBI" id="CHEBI:78529"/>
        <dbReference type="ChEBI" id="CHEBI:456215"/>
        <dbReference type="EC" id="6.1.1.6"/>
    </reaction>
</comment>
<comment type="cofactor">
    <cofactor evidence="1">
        <name>Mg(2+)</name>
        <dbReference type="ChEBI" id="CHEBI:18420"/>
    </cofactor>
    <text evidence="1">Binds 3 Mg(2+) ions per subunit.</text>
</comment>
<comment type="subunit">
    <text evidence="1">Homodimer.</text>
</comment>
<comment type="subcellular location">
    <subcellularLocation>
        <location evidence="1">Cytoplasm</location>
    </subcellularLocation>
</comment>
<comment type="similarity">
    <text evidence="1">Belongs to the class-II aminoacyl-tRNA synthetase family.</text>
</comment>
<keyword id="KW-0030">Aminoacyl-tRNA synthetase</keyword>
<keyword id="KW-0067">ATP-binding</keyword>
<keyword id="KW-0963">Cytoplasm</keyword>
<keyword id="KW-0436">Ligase</keyword>
<keyword id="KW-0460">Magnesium</keyword>
<keyword id="KW-0479">Metal-binding</keyword>
<keyword id="KW-0547">Nucleotide-binding</keyword>
<keyword id="KW-0648">Protein biosynthesis</keyword>
<keyword id="KW-1185">Reference proteome</keyword>
<feature type="chain" id="PRO_1000125522" description="Lysine--tRNA ligase">
    <location>
        <begin position="1"/>
        <end position="505"/>
    </location>
</feature>
<feature type="binding site" evidence="1">
    <location>
        <position position="415"/>
    </location>
    <ligand>
        <name>Mg(2+)</name>
        <dbReference type="ChEBI" id="CHEBI:18420"/>
        <label>1</label>
    </ligand>
</feature>
<feature type="binding site" evidence="1">
    <location>
        <position position="422"/>
    </location>
    <ligand>
        <name>Mg(2+)</name>
        <dbReference type="ChEBI" id="CHEBI:18420"/>
        <label>1</label>
    </ligand>
</feature>
<feature type="binding site" evidence="1">
    <location>
        <position position="422"/>
    </location>
    <ligand>
        <name>Mg(2+)</name>
        <dbReference type="ChEBI" id="CHEBI:18420"/>
        <label>2</label>
    </ligand>
</feature>
<dbReference type="EC" id="6.1.1.6" evidence="1"/>
<dbReference type="EMBL" id="CP000611">
    <property type="protein sequence ID" value="ABQ75424.1"/>
    <property type="molecule type" value="Genomic_DNA"/>
</dbReference>
<dbReference type="RefSeq" id="WP_003419514.1">
    <property type="nucleotide sequence ID" value="NZ_CP016972.1"/>
</dbReference>
<dbReference type="SMR" id="A5U8S4"/>
<dbReference type="KEGG" id="mra:MRA_3638"/>
<dbReference type="eggNOG" id="COG1190">
    <property type="taxonomic scope" value="Bacteria"/>
</dbReference>
<dbReference type="HOGENOM" id="CLU_008255_6_0_11"/>
<dbReference type="Proteomes" id="UP000001988">
    <property type="component" value="Chromosome"/>
</dbReference>
<dbReference type="GO" id="GO:0005829">
    <property type="term" value="C:cytosol"/>
    <property type="evidence" value="ECO:0007669"/>
    <property type="project" value="TreeGrafter"/>
</dbReference>
<dbReference type="GO" id="GO:0005524">
    <property type="term" value="F:ATP binding"/>
    <property type="evidence" value="ECO:0007669"/>
    <property type="project" value="UniProtKB-UniRule"/>
</dbReference>
<dbReference type="GO" id="GO:0004824">
    <property type="term" value="F:lysine-tRNA ligase activity"/>
    <property type="evidence" value="ECO:0007669"/>
    <property type="project" value="UniProtKB-UniRule"/>
</dbReference>
<dbReference type="GO" id="GO:0000287">
    <property type="term" value="F:magnesium ion binding"/>
    <property type="evidence" value="ECO:0007669"/>
    <property type="project" value="UniProtKB-UniRule"/>
</dbReference>
<dbReference type="GO" id="GO:0000049">
    <property type="term" value="F:tRNA binding"/>
    <property type="evidence" value="ECO:0007669"/>
    <property type="project" value="TreeGrafter"/>
</dbReference>
<dbReference type="GO" id="GO:0006430">
    <property type="term" value="P:lysyl-tRNA aminoacylation"/>
    <property type="evidence" value="ECO:0007669"/>
    <property type="project" value="UniProtKB-UniRule"/>
</dbReference>
<dbReference type="CDD" id="cd04322">
    <property type="entry name" value="LysRS_N"/>
    <property type="match status" value="1"/>
</dbReference>
<dbReference type="FunFam" id="2.40.50.140:FF:000024">
    <property type="entry name" value="Lysine--tRNA ligase"/>
    <property type="match status" value="1"/>
</dbReference>
<dbReference type="FunFam" id="3.30.930.10:FF:000079">
    <property type="entry name" value="Lysine--tRNA ligase 1"/>
    <property type="match status" value="1"/>
</dbReference>
<dbReference type="Gene3D" id="3.30.930.10">
    <property type="entry name" value="Bira Bifunctional Protein, Domain 2"/>
    <property type="match status" value="1"/>
</dbReference>
<dbReference type="Gene3D" id="2.40.50.140">
    <property type="entry name" value="Nucleic acid-binding proteins"/>
    <property type="match status" value="1"/>
</dbReference>
<dbReference type="HAMAP" id="MF_00252">
    <property type="entry name" value="Lys_tRNA_synth_class2"/>
    <property type="match status" value="1"/>
</dbReference>
<dbReference type="InterPro" id="IPR004364">
    <property type="entry name" value="Aa-tRNA-synt_II"/>
</dbReference>
<dbReference type="InterPro" id="IPR006195">
    <property type="entry name" value="aa-tRNA-synth_II"/>
</dbReference>
<dbReference type="InterPro" id="IPR045864">
    <property type="entry name" value="aa-tRNA-synth_II/BPL/LPL"/>
</dbReference>
<dbReference type="InterPro" id="IPR002313">
    <property type="entry name" value="Lys-tRNA-ligase_II"/>
</dbReference>
<dbReference type="InterPro" id="IPR044136">
    <property type="entry name" value="Lys-tRNA-ligase_II_N"/>
</dbReference>
<dbReference type="InterPro" id="IPR018149">
    <property type="entry name" value="Lys-tRNA-synth_II_C"/>
</dbReference>
<dbReference type="InterPro" id="IPR012340">
    <property type="entry name" value="NA-bd_OB-fold"/>
</dbReference>
<dbReference type="InterPro" id="IPR004365">
    <property type="entry name" value="NA-bd_OB_tRNA"/>
</dbReference>
<dbReference type="NCBIfam" id="TIGR00499">
    <property type="entry name" value="lysS_bact"/>
    <property type="match status" value="1"/>
</dbReference>
<dbReference type="NCBIfam" id="NF001756">
    <property type="entry name" value="PRK00484.1"/>
    <property type="match status" value="1"/>
</dbReference>
<dbReference type="PANTHER" id="PTHR42918:SF15">
    <property type="entry name" value="LYSINE--TRNA LIGASE, CHLOROPLASTIC_MITOCHONDRIAL"/>
    <property type="match status" value="1"/>
</dbReference>
<dbReference type="PANTHER" id="PTHR42918">
    <property type="entry name" value="LYSYL-TRNA SYNTHETASE"/>
    <property type="match status" value="1"/>
</dbReference>
<dbReference type="Pfam" id="PF00152">
    <property type="entry name" value="tRNA-synt_2"/>
    <property type="match status" value="1"/>
</dbReference>
<dbReference type="Pfam" id="PF01336">
    <property type="entry name" value="tRNA_anti-codon"/>
    <property type="match status" value="1"/>
</dbReference>
<dbReference type="PRINTS" id="PR00982">
    <property type="entry name" value="TRNASYNTHLYS"/>
</dbReference>
<dbReference type="SUPFAM" id="SSF55681">
    <property type="entry name" value="Class II aaRS and biotin synthetases"/>
    <property type="match status" value="1"/>
</dbReference>
<dbReference type="SUPFAM" id="SSF50249">
    <property type="entry name" value="Nucleic acid-binding proteins"/>
    <property type="match status" value="1"/>
</dbReference>
<dbReference type="PROSITE" id="PS50862">
    <property type="entry name" value="AA_TRNA_LIGASE_II"/>
    <property type="match status" value="1"/>
</dbReference>
<proteinExistence type="inferred from homology"/>
<reference key="1">
    <citation type="journal article" date="2008" name="PLoS ONE">
        <title>Genetic basis of virulence attenuation revealed by comparative genomic analysis of Mycobacterium tuberculosis strain H37Ra versus H37Rv.</title>
        <authorList>
            <person name="Zheng H."/>
            <person name="Lu L."/>
            <person name="Wang B."/>
            <person name="Pu S."/>
            <person name="Zhang X."/>
            <person name="Zhu G."/>
            <person name="Shi W."/>
            <person name="Zhang L."/>
            <person name="Wang H."/>
            <person name="Wang S."/>
            <person name="Zhao G."/>
            <person name="Zhang Y."/>
        </authorList>
    </citation>
    <scope>NUCLEOTIDE SEQUENCE [LARGE SCALE GENOMIC DNA]</scope>
    <source>
        <strain>ATCC 25177 / H37Ra</strain>
    </source>
</reference>
<organism>
    <name type="scientific">Mycobacterium tuberculosis (strain ATCC 25177 / H37Ra)</name>
    <dbReference type="NCBI Taxonomy" id="419947"/>
    <lineage>
        <taxon>Bacteria</taxon>
        <taxon>Bacillati</taxon>
        <taxon>Actinomycetota</taxon>
        <taxon>Actinomycetes</taxon>
        <taxon>Mycobacteriales</taxon>
        <taxon>Mycobacteriaceae</taxon>
        <taxon>Mycobacterium</taxon>
        <taxon>Mycobacterium tuberculosis complex</taxon>
    </lineage>
</organism>
<gene>
    <name evidence="1" type="primary">lysS</name>
    <name type="ordered locus">MRA_3638</name>
</gene>